<dbReference type="EC" id="3.6.5.3" evidence="2"/>
<dbReference type="EMBL" id="CP000804">
    <property type="protein sequence ID" value="ABU60347.1"/>
    <property type="molecule type" value="Genomic_DNA"/>
</dbReference>
<dbReference type="RefSeq" id="WP_012122768.1">
    <property type="nucleotide sequence ID" value="NC_009767.1"/>
</dbReference>
<dbReference type="SMR" id="A7NS01"/>
<dbReference type="STRING" id="383372.Rcas_4323"/>
<dbReference type="KEGG" id="rca:Rcas_4323"/>
<dbReference type="eggNOG" id="COG0050">
    <property type="taxonomic scope" value="Bacteria"/>
</dbReference>
<dbReference type="HOGENOM" id="CLU_007265_0_1_0"/>
<dbReference type="OrthoDB" id="9804504at2"/>
<dbReference type="Proteomes" id="UP000000263">
    <property type="component" value="Chromosome"/>
</dbReference>
<dbReference type="GO" id="GO:0005829">
    <property type="term" value="C:cytosol"/>
    <property type="evidence" value="ECO:0007669"/>
    <property type="project" value="TreeGrafter"/>
</dbReference>
<dbReference type="GO" id="GO:0005525">
    <property type="term" value="F:GTP binding"/>
    <property type="evidence" value="ECO:0007669"/>
    <property type="project" value="UniProtKB-UniRule"/>
</dbReference>
<dbReference type="GO" id="GO:0003924">
    <property type="term" value="F:GTPase activity"/>
    <property type="evidence" value="ECO:0007669"/>
    <property type="project" value="InterPro"/>
</dbReference>
<dbReference type="GO" id="GO:0003746">
    <property type="term" value="F:translation elongation factor activity"/>
    <property type="evidence" value="ECO:0007669"/>
    <property type="project" value="UniProtKB-UniRule"/>
</dbReference>
<dbReference type="CDD" id="cd01884">
    <property type="entry name" value="EF_Tu"/>
    <property type="match status" value="1"/>
</dbReference>
<dbReference type="CDD" id="cd03697">
    <property type="entry name" value="EFTU_II"/>
    <property type="match status" value="1"/>
</dbReference>
<dbReference type="CDD" id="cd03707">
    <property type="entry name" value="EFTU_III"/>
    <property type="match status" value="1"/>
</dbReference>
<dbReference type="FunFam" id="2.40.30.10:FF:000001">
    <property type="entry name" value="Elongation factor Tu"/>
    <property type="match status" value="1"/>
</dbReference>
<dbReference type="FunFam" id="3.40.50.300:FF:000003">
    <property type="entry name" value="Elongation factor Tu"/>
    <property type="match status" value="1"/>
</dbReference>
<dbReference type="Gene3D" id="3.40.50.300">
    <property type="entry name" value="P-loop containing nucleotide triphosphate hydrolases"/>
    <property type="match status" value="1"/>
</dbReference>
<dbReference type="Gene3D" id="2.40.30.10">
    <property type="entry name" value="Translation factors"/>
    <property type="match status" value="2"/>
</dbReference>
<dbReference type="HAMAP" id="MF_00118_B">
    <property type="entry name" value="EF_Tu_B"/>
    <property type="match status" value="1"/>
</dbReference>
<dbReference type="InterPro" id="IPR041709">
    <property type="entry name" value="EF-Tu_GTP-bd"/>
</dbReference>
<dbReference type="InterPro" id="IPR050055">
    <property type="entry name" value="EF-Tu_GTPase"/>
</dbReference>
<dbReference type="InterPro" id="IPR004161">
    <property type="entry name" value="EFTu-like_2"/>
</dbReference>
<dbReference type="InterPro" id="IPR033720">
    <property type="entry name" value="EFTU_2"/>
</dbReference>
<dbReference type="InterPro" id="IPR031157">
    <property type="entry name" value="G_TR_CS"/>
</dbReference>
<dbReference type="InterPro" id="IPR027417">
    <property type="entry name" value="P-loop_NTPase"/>
</dbReference>
<dbReference type="InterPro" id="IPR005225">
    <property type="entry name" value="Small_GTP-bd"/>
</dbReference>
<dbReference type="InterPro" id="IPR000795">
    <property type="entry name" value="T_Tr_GTP-bd_dom"/>
</dbReference>
<dbReference type="InterPro" id="IPR009000">
    <property type="entry name" value="Transl_B-barrel_sf"/>
</dbReference>
<dbReference type="InterPro" id="IPR009001">
    <property type="entry name" value="Transl_elong_EF1A/Init_IF2_C"/>
</dbReference>
<dbReference type="InterPro" id="IPR004541">
    <property type="entry name" value="Transl_elong_EFTu/EF1A_bac/org"/>
</dbReference>
<dbReference type="InterPro" id="IPR004160">
    <property type="entry name" value="Transl_elong_EFTu/EF1A_C"/>
</dbReference>
<dbReference type="NCBIfam" id="TIGR00485">
    <property type="entry name" value="EF-Tu"/>
    <property type="match status" value="1"/>
</dbReference>
<dbReference type="NCBIfam" id="NF000766">
    <property type="entry name" value="PRK00049.1"/>
    <property type="match status" value="1"/>
</dbReference>
<dbReference type="NCBIfam" id="NF009372">
    <property type="entry name" value="PRK12735.1"/>
    <property type="match status" value="1"/>
</dbReference>
<dbReference type="NCBIfam" id="NF009373">
    <property type="entry name" value="PRK12736.1"/>
    <property type="match status" value="1"/>
</dbReference>
<dbReference type="NCBIfam" id="TIGR00231">
    <property type="entry name" value="small_GTP"/>
    <property type="match status" value="1"/>
</dbReference>
<dbReference type="PANTHER" id="PTHR43721:SF22">
    <property type="entry name" value="ELONGATION FACTOR TU, MITOCHONDRIAL"/>
    <property type="match status" value="1"/>
</dbReference>
<dbReference type="PANTHER" id="PTHR43721">
    <property type="entry name" value="ELONGATION FACTOR TU-RELATED"/>
    <property type="match status" value="1"/>
</dbReference>
<dbReference type="Pfam" id="PF00009">
    <property type="entry name" value="GTP_EFTU"/>
    <property type="match status" value="1"/>
</dbReference>
<dbReference type="Pfam" id="PF03144">
    <property type="entry name" value="GTP_EFTU_D2"/>
    <property type="match status" value="1"/>
</dbReference>
<dbReference type="Pfam" id="PF03143">
    <property type="entry name" value="GTP_EFTU_D3"/>
    <property type="match status" value="1"/>
</dbReference>
<dbReference type="PRINTS" id="PR00315">
    <property type="entry name" value="ELONGATNFCT"/>
</dbReference>
<dbReference type="SUPFAM" id="SSF50465">
    <property type="entry name" value="EF-Tu/eEF-1alpha/eIF2-gamma C-terminal domain"/>
    <property type="match status" value="1"/>
</dbReference>
<dbReference type="SUPFAM" id="SSF52540">
    <property type="entry name" value="P-loop containing nucleoside triphosphate hydrolases"/>
    <property type="match status" value="1"/>
</dbReference>
<dbReference type="SUPFAM" id="SSF50447">
    <property type="entry name" value="Translation proteins"/>
    <property type="match status" value="1"/>
</dbReference>
<dbReference type="PROSITE" id="PS00301">
    <property type="entry name" value="G_TR_1"/>
    <property type="match status" value="1"/>
</dbReference>
<dbReference type="PROSITE" id="PS51722">
    <property type="entry name" value="G_TR_2"/>
    <property type="match status" value="1"/>
</dbReference>
<feature type="chain" id="PRO_0000337503" description="Elongation factor Tu 2">
    <location>
        <begin position="1"/>
        <end position="401"/>
    </location>
</feature>
<feature type="domain" description="tr-type G">
    <location>
        <begin position="10"/>
        <end position="209"/>
    </location>
</feature>
<feature type="region of interest" description="G1" evidence="1">
    <location>
        <begin position="19"/>
        <end position="26"/>
    </location>
</feature>
<feature type="region of interest" description="G2" evidence="1">
    <location>
        <begin position="60"/>
        <end position="64"/>
    </location>
</feature>
<feature type="region of interest" description="G3" evidence="1">
    <location>
        <begin position="81"/>
        <end position="84"/>
    </location>
</feature>
<feature type="region of interest" description="G4" evidence="1">
    <location>
        <begin position="136"/>
        <end position="139"/>
    </location>
</feature>
<feature type="region of interest" description="G5" evidence="1">
    <location>
        <begin position="174"/>
        <end position="176"/>
    </location>
</feature>
<feature type="binding site" evidence="2">
    <location>
        <begin position="19"/>
        <end position="26"/>
    </location>
    <ligand>
        <name>GTP</name>
        <dbReference type="ChEBI" id="CHEBI:37565"/>
    </ligand>
</feature>
<feature type="binding site" evidence="2">
    <location>
        <position position="26"/>
    </location>
    <ligand>
        <name>Mg(2+)</name>
        <dbReference type="ChEBI" id="CHEBI:18420"/>
    </ligand>
</feature>
<feature type="binding site" evidence="2">
    <location>
        <begin position="81"/>
        <end position="85"/>
    </location>
    <ligand>
        <name>GTP</name>
        <dbReference type="ChEBI" id="CHEBI:37565"/>
    </ligand>
</feature>
<feature type="binding site" evidence="2">
    <location>
        <begin position="136"/>
        <end position="139"/>
    </location>
    <ligand>
        <name>GTP</name>
        <dbReference type="ChEBI" id="CHEBI:37565"/>
    </ligand>
</feature>
<proteinExistence type="inferred from homology"/>
<name>EFTU2_ROSCS</name>
<sequence>MAKQKFERTKPHVNVGTIGHVDHGKTTLTAAITKVLALQGAAQFVSYDQIDNAPEERARGITIAIRHVEYQTAKRHYAHVDCPGHADYIKNMITGAAQMDGAILVVSAPDGPMPQTREHVLLARQVQVPAMVVFLNKVDMMDDEELLELVELELRELLSNHGFPGDEIPIIRGSALAALSSASTDINAPEYQCILDLMNAVDEYIPTPVREVDKPFLMPIEDVFGIKGRGTVVTGRIERGKVKMGDTVEIVGMSHEAPKKTVVTGVEMFQKTLDEGIAGDNVGVLLRGIERTEVERGQVLAAPGSIKPHAKFKANVYVLKKEEGGRHTPFFPGYRPQFYIRTTDVTGAISLPAGVEMVMPGDNIEMLVELIVPVAIEEGLRFAIREGGRTVGAGVVSAIVD</sequence>
<gene>
    <name evidence="2" type="primary">tuf2</name>
    <name type="ordered locus">Rcas_4323</name>
</gene>
<reference key="1">
    <citation type="submission" date="2007-08" db="EMBL/GenBank/DDBJ databases">
        <title>Complete sequence of Roseiflexus castenholzii DSM 13941.</title>
        <authorList>
            <consortium name="US DOE Joint Genome Institute"/>
            <person name="Copeland A."/>
            <person name="Lucas S."/>
            <person name="Lapidus A."/>
            <person name="Barry K."/>
            <person name="Glavina del Rio T."/>
            <person name="Dalin E."/>
            <person name="Tice H."/>
            <person name="Pitluck S."/>
            <person name="Thompson L.S."/>
            <person name="Brettin T."/>
            <person name="Bruce D."/>
            <person name="Detter J.C."/>
            <person name="Han C."/>
            <person name="Tapia R."/>
            <person name="Schmutz J."/>
            <person name="Larimer F."/>
            <person name="Land M."/>
            <person name="Hauser L."/>
            <person name="Kyrpides N."/>
            <person name="Mikhailova N."/>
            <person name="Bryant D.A."/>
            <person name="Hanada S."/>
            <person name="Tsukatani Y."/>
            <person name="Richardson P."/>
        </authorList>
    </citation>
    <scope>NUCLEOTIDE SEQUENCE [LARGE SCALE GENOMIC DNA]</scope>
    <source>
        <strain>DSM 13941 / HLO8</strain>
    </source>
</reference>
<evidence type="ECO:0000250" key="1"/>
<evidence type="ECO:0000255" key="2">
    <source>
        <dbReference type="HAMAP-Rule" id="MF_00118"/>
    </source>
</evidence>
<keyword id="KW-0963">Cytoplasm</keyword>
<keyword id="KW-0251">Elongation factor</keyword>
<keyword id="KW-0342">GTP-binding</keyword>
<keyword id="KW-0378">Hydrolase</keyword>
<keyword id="KW-0460">Magnesium</keyword>
<keyword id="KW-0479">Metal-binding</keyword>
<keyword id="KW-0547">Nucleotide-binding</keyword>
<keyword id="KW-0648">Protein biosynthesis</keyword>
<keyword id="KW-1185">Reference proteome</keyword>
<protein>
    <recommendedName>
        <fullName evidence="2">Elongation factor Tu 2</fullName>
        <shortName evidence="2">EF-Tu 2</shortName>
        <ecNumber evidence="2">3.6.5.3</ecNumber>
    </recommendedName>
</protein>
<comment type="function">
    <text evidence="2">GTP hydrolase that promotes the GTP-dependent binding of aminoacyl-tRNA to the A-site of ribosomes during protein biosynthesis.</text>
</comment>
<comment type="catalytic activity">
    <reaction evidence="2">
        <text>GTP + H2O = GDP + phosphate + H(+)</text>
        <dbReference type="Rhea" id="RHEA:19669"/>
        <dbReference type="ChEBI" id="CHEBI:15377"/>
        <dbReference type="ChEBI" id="CHEBI:15378"/>
        <dbReference type="ChEBI" id="CHEBI:37565"/>
        <dbReference type="ChEBI" id="CHEBI:43474"/>
        <dbReference type="ChEBI" id="CHEBI:58189"/>
        <dbReference type="EC" id="3.6.5.3"/>
    </reaction>
    <physiologicalReaction direction="left-to-right" evidence="2">
        <dbReference type="Rhea" id="RHEA:19670"/>
    </physiologicalReaction>
</comment>
<comment type="subunit">
    <text evidence="2">Monomer.</text>
</comment>
<comment type="subcellular location">
    <subcellularLocation>
        <location evidence="2">Cytoplasm</location>
    </subcellularLocation>
</comment>
<comment type="similarity">
    <text evidence="2">Belongs to the TRAFAC class translation factor GTPase superfamily. Classic translation factor GTPase family. EF-Tu/EF-1A subfamily.</text>
</comment>
<organism>
    <name type="scientific">Roseiflexus castenholzii (strain DSM 13941 / HLO8)</name>
    <dbReference type="NCBI Taxonomy" id="383372"/>
    <lineage>
        <taxon>Bacteria</taxon>
        <taxon>Bacillati</taxon>
        <taxon>Chloroflexota</taxon>
        <taxon>Chloroflexia</taxon>
        <taxon>Chloroflexales</taxon>
        <taxon>Roseiflexineae</taxon>
        <taxon>Roseiflexaceae</taxon>
        <taxon>Roseiflexus</taxon>
    </lineage>
</organism>
<accession>A7NS01</accession>